<geneLocation type="chloroplast"/>
<accession>O78417</accession>
<gene>
    <name type="primary">ycf29</name>
</gene>
<comment type="subcellular location">
    <subcellularLocation>
        <location>Plastid</location>
        <location>Chloroplast</location>
    </subcellularLocation>
</comment>
<organism>
    <name type="scientific">Guillardia theta</name>
    <name type="common">Cryptophyte</name>
    <name type="synonym">Cryptomonas phi</name>
    <dbReference type="NCBI Taxonomy" id="55529"/>
    <lineage>
        <taxon>Eukaryota</taxon>
        <taxon>Cryptophyceae</taxon>
        <taxon>Pyrenomonadales</taxon>
        <taxon>Geminigeraceae</taxon>
        <taxon>Guillardia</taxon>
    </lineage>
</organism>
<proteinExistence type="inferred from homology"/>
<feature type="chain" id="PRO_0000081355" description="Probable transcriptional regulator ycf29">
    <location>
        <begin position="1"/>
        <end position="208"/>
    </location>
</feature>
<feature type="domain" description="Response regulatory" evidence="1">
    <location>
        <begin position="11"/>
        <end position="118"/>
    </location>
</feature>
<feature type="domain" description="HTH luxR-type" evidence="2">
    <location>
        <begin position="146"/>
        <end position="208"/>
    </location>
</feature>
<feature type="modified residue" description="4-aspartylphosphate" evidence="1">
    <location>
        <position position="60"/>
    </location>
</feature>
<sequence>MDKELKKEKIKLILIEPEEHLGYLLSEFFYQQNFVTYISESFIHLTDIINLHNPDIIIIDDSQNLETYKLSNIYLPIILLTTRGLKNDRMKIHKLGFDAYMLKPFDPDELIAIISNLIYKKRNIKELQFIKHRISNLNLKLKYRETSFSYINLTVKEKEVFKFIQDGLTNKQISNVMGITQRSVEKYVTKIFEKLKIQNRIQILSYFN</sequence>
<keyword id="KW-0150">Chloroplast</keyword>
<keyword id="KW-0238">DNA-binding</keyword>
<keyword id="KW-0597">Phosphoprotein</keyword>
<keyword id="KW-0934">Plastid</keyword>
<keyword id="KW-0804">Transcription</keyword>
<keyword id="KW-0805">Transcription regulation</keyword>
<keyword id="KW-0902">Two-component regulatory system</keyword>
<dbReference type="EMBL" id="AF041468">
    <property type="protein sequence ID" value="AAC35602.1"/>
    <property type="molecule type" value="Genomic_DNA"/>
</dbReference>
<dbReference type="RefSeq" id="NP_050668.1">
    <property type="nucleotide sequence ID" value="NC_000926.1"/>
</dbReference>
<dbReference type="SMR" id="O78417"/>
<dbReference type="GeneID" id="856954"/>
<dbReference type="HOGENOM" id="CLU_000445_90_4_1"/>
<dbReference type="OMA" id="YQIACEL"/>
<dbReference type="GO" id="GO:0009507">
    <property type="term" value="C:chloroplast"/>
    <property type="evidence" value="ECO:0007669"/>
    <property type="project" value="UniProtKB-SubCell"/>
</dbReference>
<dbReference type="GO" id="GO:0003677">
    <property type="term" value="F:DNA binding"/>
    <property type="evidence" value="ECO:0007669"/>
    <property type="project" value="UniProtKB-KW"/>
</dbReference>
<dbReference type="GO" id="GO:0000160">
    <property type="term" value="P:phosphorelay signal transduction system"/>
    <property type="evidence" value="ECO:0007669"/>
    <property type="project" value="UniProtKB-KW"/>
</dbReference>
<dbReference type="GO" id="GO:0006355">
    <property type="term" value="P:regulation of DNA-templated transcription"/>
    <property type="evidence" value="ECO:0007669"/>
    <property type="project" value="InterPro"/>
</dbReference>
<dbReference type="CDD" id="cd06170">
    <property type="entry name" value="LuxR_C_like"/>
    <property type="match status" value="1"/>
</dbReference>
<dbReference type="Gene3D" id="3.40.50.2300">
    <property type="match status" value="1"/>
</dbReference>
<dbReference type="Gene3D" id="1.10.10.10">
    <property type="entry name" value="Winged helix-like DNA-binding domain superfamily/Winged helix DNA-binding domain"/>
    <property type="match status" value="1"/>
</dbReference>
<dbReference type="InterPro" id="IPR011006">
    <property type="entry name" value="CheY-like_superfamily"/>
</dbReference>
<dbReference type="InterPro" id="IPR051015">
    <property type="entry name" value="RcsB_transcriptional_reg"/>
</dbReference>
<dbReference type="InterPro" id="IPR001789">
    <property type="entry name" value="Sig_transdc_resp-reg_receiver"/>
</dbReference>
<dbReference type="InterPro" id="IPR000792">
    <property type="entry name" value="Tscrpt_reg_LuxR_C"/>
</dbReference>
<dbReference type="InterPro" id="IPR036388">
    <property type="entry name" value="WH-like_DNA-bd_sf"/>
</dbReference>
<dbReference type="PANTHER" id="PTHR45566">
    <property type="entry name" value="HTH-TYPE TRANSCRIPTIONAL REGULATOR YHJB-RELATED"/>
    <property type="match status" value="1"/>
</dbReference>
<dbReference type="PANTHER" id="PTHR45566:SF1">
    <property type="entry name" value="HTH-TYPE TRANSCRIPTIONAL REGULATOR YHJB-RELATED"/>
    <property type="match status" value="1"/>
</dbReference>
<dbReference type="Pfam" id="PF00196">
    <property type="entry name" value="GerE"/>
    <property type="match status" value="1"/>
</dbReference>
<dbReference type="PRINTS" id="PR00038">
    <property type="entry name" value="HTHLUXR"/>
</dbReference>
<dbReference type="SMART" id="SM00421">
    <property type="entry name" value="HTH_LUXR"/>
    <property type="match status" value="1"/>
</dbReference>
<dbReference type="SMART" id="SM00448">
    <property type="entry name" value="REC"/>
    <property type="match status" value="1"/>
</dbReference>
<dbReference type="SUPFAM" id="SSF52172">
    <property type="entry name" value="CheY-like"/>
    <property type="match status" value="1"/>
</dbReference>
<dbReference type="PROSITE" id="PS50043">
    <property type="entry name" value="HTH_LUXR_2"/>
    <property type="match status" value="1"/>
</dbReference>
<dbReference type="PROSITE" id="PS50110">
    <property type="entry name" value="RESPONSE_REGULATORY"/>
    <property type="match status" value="1"/>
</dbReference>
<evidence type="ECO:0000255" key="1">
    <source>
        <dbReference type="PROSITE-ProRule" id="PRU00169"/>
    </source>
</evidence>
<evidence type="ECO:0000255" key="2">
    <source>
        <dbReference type="PROSITE-ProRule" id="PRU00411"/>
    </source>
</evidence>
<reference key="1">
    <citation type="journal article" date="1999" name="J. Mol. Evol.">
        <title>The plastid genome of the cryptophyte alga, Guillardia theta: complete sequence and conserved synteny groups confirm its common ancestry with red algae.</title>
        <authorList>
            <person name="Douglas S.E."/>
            <person name="Penny S.L."/>
        </authorList>
    </citation>
    <scope>NUCLEOTIDE SEQUENCE [LARGE SCALE GENOMIC DNA]</scope>
</reference>
<name>YCF29_GUITH</name>
<protein>
    <recommendedName>
        <fullName>Probable transcriptional regulator ycf29</fullName>
    </recommendedName>
</protein>